<organism>
    <name type="scientific">Drosophila melanogaster</name>
    <name type="common">Fruit fly</name>
    <dbReference type="NCBI Taxonomy" id="7227"/>
    <lineage>
        <taxon>Eukaryota</taxon>
        <taxon>Metazoa</taxon>
        <taxon>Ecdysozoa</taxon>
        <taxon>Arthropoda</taxon>
        <taxon>Hexapoda</taxon>
        <taxon>Insecta</taxon>
        <taxon>Pterygota</taxon>
        <taxon>Neoptera</taxon>
        <taxon>Endopterygota</taxon>
        <taxon>Diptera</taxon>
        <taxon>Brachycera</taxon>
        <taxon>Muscomorpha</taxon>
        <taxon>Ephydroidea</taxon>
        <taxon>Drosophilidae</taxon>
        <taxon>Drosophila</taxon>
        <taxon>Sophophora</taxon>
    </lineage>
</organism>
<protein>
    <recommendedName>
        <fullName>Protein misato</fullName>
    </recommendedName>
</protein>
<keyword id="KW-0496">Mitochondrion</keyword>
<keyword id="KW-1185">Reference proteome</keyword>
<reference key="1">
    <citation type="journal article" date="1997" name="Proc. Natl. Acad. Sci. U.S.A.">
        <title>An essential cell division gene of Drosophila, absent from Saccharomyces, encodes an unusual protein with tubulin-like and myosin-like peptide motifs.</title>
        <authorList>
            <person name="Miklos G.L."/>
            <person name="Yamamoto M.-T."/>
            <person name="Burns R.G."/>
            <person name="Maleszka R."/>
        </authorList>
    </citation>
    <scope>NUCLEOTIDE SEQUENCE [GENOMIC DNA]</scope>
    <scope>DISRUPTION PHENOTYPE</scope>
    <source>
        <strain>Canton-S</strain>
    </source>
</reference>
<reference key="2">
    <citation type="journal article" date="2000" name="Science">
        <title>The genome sequence of Drosophila melanogaster.</title>
        <authorList>
            <person name="Adams M.D."/>
            <person name="Celniker S.E."/>
            <person name="Holt R.A."/>
            <person name="Evans C.A."/>
            <person name="Gocayne J.D."/>
            <person name="Amanatides P.G."/>
            <person name="Scherer S.E."/>
            <person name="Li P.W."/>
            <person name="Hoskins R.A."/>
            <person name="Galle R.F."/>
            <person name="George R.A."/>
            <person name="Lewis S.E."/>
            <person name="Richards S."/>
            <person name="Ashburner M."/>
            <person name="Henderson S.N."/>
            <person name="Sutton G.G."/>
            <person name="Wortman J.R."/>
            <person name="Yandell M.D."/>
            <person name="Zhang Q."/>
            <person name="Chen L.X."/>
            <person name="Brandon R.C."/>
            <person name="Rogers Y.-H.C."/>
            <person name="Blazej R.G."/>
            <person name="Champe M."/>
            <person name="Pfeiffer B.D."/>
            <person name="Wan K.H."/>
            <person name="Doyle C."/>
            <person name="Baxter E.G."/>
            <person name="Helt G."/>
            <person name="Nelson C.R."/>
            <person name="Miklos G.L.G."/>
            <person name="Abril J.F."/>
            <person name="Agbayani A."/>
            <person name="An H.-J."/>
            <person name="Andrews-Pfannkoch C."/>
            <person name="Baldwin D."/>
            <person name="Ballew R.M."/>
            <person name="Basu A."/>
            <person name="Baxendale J."/>
            <person name="Bayraktaroglu L."/>
            <person name="Beasley E.M."/>
            <person name="Beeson K.Y."/>
            <person name="Benos P.V."/>
            <person name="Berman B.P."/>
            <person name="Bhandari D."/>
            <person name="Bolshakov S."/>
            <person name="Borkova D."/>
            <person name="Botchan M.R."/>
            <person name="Bouck J."/>
            <person name="Brokstein P."/>
            <person name="Brottier P."/>
            <person name="Burtis K.C."/>
            <person name="Busam D.A."/>
            <person name="Butler H."/>
            <person name="Cadieu E."/>
            <person name="Center A."/>
            <person name="Chandra I."/>
            <person name="Cherry J.M."/>
            <person name="Cawley S."/>
            <person name="Dahlke C."/>
            <person name="Davenport L.B."/>
            <person name="Davies P."/>
            <person name="de Pablos B."/>
            <person name="Delcher A."/>
            <person name="Deng Z."/>
            <person name="Mays A.D."/>
            <person name="Dew I."/>
            <person name="Dietz S.M."/>
            <person name="Dodson K."/>
            <person name="Doup L.E."/>
            <person name="Downes M."/>
            <person name="Dugan-Rocha S."/>
            <person name="Dunkov B.C."/>
            <person name="Dunn P."/>
            <person name="Durbin K.J."/>
            <person name="Evangelista C.C."/>
            <person name="Ferraz C."/>
            <person name="Ferriera S."/>
            <person name="Fleischmann W."/>
            <person name="Fosler C."/>
            <person name="Gabrielian A.E."/>
            <person name="Garg N.S."/>
            <person name="Gelbart W.M."/>
            <person name="Glasser K."/>
            <person name="Glodek A."/>
            <person name="Gong F."/>
            <person name="Gorrell J.H."/>
            <person name="Gu Z."/>
            <person name="Guan P."/>
            <person name="Harris M."/>
            <person name="Harris N.L."/>
            <person name="Harvey D.A."/>
            <person name="Heiman T.J."/>
            <person name="Hernandez J.R."/>
            <person name="Houck J."/>
            <person name="Hostin D."/>
            <person name="Houston K.A."/>
            <person name="Howland T.J."/>
            <person name="Wei M.-H."/>
            <person name="Ibegwam C."/>
            <person name="Jalali M."/>
            <person name="Kalush F."/>
            <person name="Karpen G.H."/>
            <person name="Ke Z."/>
            <person name="Kennison J.A."/>
            <person name="Ketchum K.A."/>
            <person name="Kimmel B.E."/>
            <person name="Kodira C.D."/>
            <person name="Kraft C.L."/>
            <person name="Kravitz S."/>
            <person name="Kulp D."/>
            <person name="Lai Z."/>
            <person name="Lasko P."/>
            <person name="Lei Y."/>
            <person name="Levitsky A.A."/>
            <person name="Li J.H."/>
            <person name="Li Z."/>
            <person name="Liang Y."/>
            <person name="Lin X."/>
            <person name="Liu X."/>
            <person name="Mattei B."/>
            <person name="McIntosh T.C."/>
            <person name="McLeod M.P."/>
            <person name="McPherson D."/>
            <person name="Merkulov G."/>
            <person name="Milshina N.V."/>
            <person name="Mobarry C."/>
            <person name="Morris J."/>
            <person name="Moshrefi A."/>
            <person name="Mount S.M."/>
            <person name="Moy M."/>
            <person name="Murphy B."/>
            <person name="Murphy L."/>
            <person name="Muzny D.M."/>
            <person name="Nelson D.L."/>
            <person name="Nelson D.R."/>
            <person name="Nelson K.A."/>
            <person name="Nixon K."/>
            <person name="Nusskern D.R."/>
            <person name="Pacleb J.M."/>
            <person name="Palazzolo M."/>
            <person name="Pittman G.S."/>
            <person name="Pan S."/>
            <person name="Pollard J."/>
            <person name="Puri V."/>
            <person name="Reese M.G."/>
            <person name="Reinert K."/>
            <person name="Remington K."/>
            <person name="Saunders R.D.C."/>
            <person name="Scheeler F."/>
            <person name="Shen H."/>
            <person name="Shue B.C."/>
            <person name="Siden-Kiamos I."/>
            <person name="Simpson M."/>
            <person name="Skupski M.P."/>
            <person name="Smith T.J."/>
            <person name="Spier E."/>
            <person name="Spradling A.C."/>
            <person name="Stapleton M."/>
            <person name="Strong R."/>
            <person name="Sun E."/>
            <person name="Svirskas R."/>
            <person name="Tector C."/>
            <person name="Turner R."/>
            <person name="Venter E."/>
            <person name="Wang A.H."/>
            <person name="Wang X."/>
            <person name="Wang Z.-Y."/>
            <person name="Wassarman D.A."/>
            <person name="Weinstock G.M."/>
            <person name="Weissenbach J."/>
            <person name="Williams S.M."/>
            <person name="Woodage T."/>
            <person name="Worley K.C."/>
            <person name="Wu D."/>
            <person name="Yang S."/>
            <person name="Yao Q.A."/>
            <person name="Ye J."/>
            <person name="Yeh R.-F."/>
            <person name="Zaveri J.S."/>
            <person name="Zhan M."/>
            <person name="Zhang G."/>
            <person name="Zhao Q."/>
            <person name="Zheng L."/>
            <person name="Zheng X.H."/>
            <person name="Zhong F.N."/>
            <person name="Zhong W."/>
            <person name="Zhou X."/>
            <person name="Zhu S.C."/>
            <person name="Zhu X."/>
            <person name="Smith H.O."/>
            <person name="Gibbs R.A."/>
            <person name="Myers E.W."/>
            <person name="Rubin G.M."/>
            <person name="Venter J.C."/>
        </authorList>
    </citation>
    <scope>NUCLEOTIDE SEQUENCE [LARGE SCALE GENOMIC DNA]</scope>
    <source>
        <strain>Berkeley</strain>
    </source>
</reference>
<reference key="3">
    <citation type="journal article" date="2002" name="Genome Biol.">
        <title>Annotation of the Drosophila melanogaster euchromatic genome: a systematic review.</title>
        <authorList>
            <person name="Misra S."/>
            <person name="Crosby M.A."/>
            <person name="Mungall C.J."/>
            <person name="Matthews B.B."/>
            <person name="Campbell K.S."/>
            <person name="Hradecky P."/>
            <person name="Huang Y."/>
            <person name="Kaminker J.S."/>
            <person name="Millburn G.H."/>
            <person name="Prochnik S.E."/>
            <person name="Smith C.D."/>
            <person name="Tupy J.L."/>
            <person name="Whitfield E.J."/>
            <person name="Bayraktaroglu L."/>
            <person name="Berman B.P."/>
            <person name="Bettencourt B.R."/>
            <person name="Celniker S.E."/>
            <person name="de Grey A.D.N.J."/>
            <person name="Drysdale R.A."/>
            <person name="Harris N.L."/>
            <person name="Richter J."/>
            <person name="Russo S."/>
            <person name="Schroeder A.J."/>
            <person name="Shu S.Q."/>
            <person name="Stapleton M."/>
            <person name="Yamada C."/>
            <person name="Ashburner M."/>
            <person name="Gelbart W.M."/>
            <person name="Rubin G.M."/>
            <person name="Lewis S.E."/>
        </authorList>
    </citation>
    <scope>GENOME REANNOTATION</scope>
    <source>
        <strain>Berkeley</strain>
    </source>
</reference>
<reference key="4">
    <citation type="journal article" date="2002" name="Genome Biol.">
        <title>A Drosophila full-length cDNA resource.</title>
        <authorList>
            <person name="Stapleton M."/>
            <person name="Carlson J.W."/>
            <person name="Brokstein P."/>
            <person name="Yu C."/>
            <person name="Champe M."/>
            <person name="George R.A."/>
            <person name="Guarin H."/>
            <person name="Kronmiller B."/>
            <person name="Pacleb J.M."/>
            <person name="Park S."/>
            <person name="Wan K.H."/>
            <person name="Rubin G.M."/>
            <person name="Celniker S.E."/>
        </authorList>
    </citation>
    <scope>NUCLEOTIDE SEQUENCE [LARGE SCALE MRNA] OF 2-574</scope>
    <source>
        <strain>Berkeley</strain>
        <tissue>Embryo</tissue>
    </source>
</reference>
<comment type="subcellular location">
    <subcellularLocation>
        <location evidence="1">Mitochondrion</location>
    </subcellularLocation>
</comment>
<comment type="disruption phenotype">
    <text evidence="2">Irregular chromosome segregation during mitosis leading to death before the third instar larval stage. Larvae show abnormalities such as absence of imaginal disk tissue, and reduction in brain size.</text>
</comment>
<comment type="miscellaneous">
    <text>'Misato' means 'beautiful dawn' in Japanese.</text>
</comment>
<comment type="similarity">
    <text evidence="3">Belongs to the misato family.</text>
</comment>
<comment type="sequence caution" evidence="3">
    <conflict type="erroneous initiation">
        <sequence resource="EMBL-CDS" id="AAM50812"/>
    </conflict>
</comment>
<name>MST_DROME</name>
<evidence type="ECO:0000250" key="1"/>
<evidence type="ECO:0000269" key="2">
    <source>
    </source>
</evidence>
<evidence type="ECO:0000305" key="3"/>
<proteinExistence type="evidence at transcript level"/>
<sequence>MDYTREILTFQFGTYANYVGTHFWNQQEANFRYGDESEQVAEEQLPNNDILYREGRNDLNRTTYTPRLLSVDLSGTLGHLPVTGELYGNFVQRDEELLPLSTGEELEQVRKRAEESGVCSPEQLEVQEQSKASISEYQRDLLKNAVVPEKNYQLAATANSWVDFLYARYHPRTLNVLPGLIRDPTAQALGTYSAGTEMWQEVSFNEEFCDRIRLYVEECDGLQGFHVLFDIDDGFGGLAGKCLEHLNDEYSRASFALPLHYPRITSYPQADTRLSHSIRVVNNVLGYHQLSEQALMFTPLSTLETIWRNNNLKSRSLPGLQWETDNLYQTSALLAAFFDTATLSYRLRQTPESLLRFCECVTPAGRKMTAAGLALPFGLREGQDLIEFLDQSGDHALLTQLTPGCEPGTSYVVQSVTARGIPAERLKRPRELAGDQLRMAAYSCDSISHMLQLYYQCTYHGSVTNAAATPLPLKTQLPFPYEMFAAGISRDGYRLPEGAERETGSRVDSAPMLAAVQNSTKLGEHLDNVHAQSHRVQLAKLQAYSNSGLERDEYDTALDQLLEFRDLYADSQYL</sequence>
<dbReference type="EMBL" id="AF017777">
    <property type="protein sequence ID" value="AAC28411.1"/>
    <property type="molecule type" value="Genomic_DNA"/>
</dbReference>
<dbReference type="EMBL" id="AE014298">
    <property type="protein sequence ID" value="AAF50817.1"/>
    <property type="molecule type" value="Genomic_DNA"/>
</dbReference>
<dbReference type="EMBL" id="AY118952">
    <property type="protein sequence ID" value="AAM50812.1"/>
    <property type="status" value="ALT_INIT"/>
    <property type="molecule type" value="mRNA"/>
</dbReference>
<dbReference type="PIR" id="T08434">
    <property type="entry name" value="T08434"/>
</dbReference>
<dbReference type="RefSeq" id="NP_001285518.1">
    <property type="nucleotide sequence ID" value="NM_001298589.1"/>
</dbReference>
<dbReference type="RefSeq" id="NP_523435.1">
    <property type="nucleotide sequence ID" value="NM_078711.5"/>
</dbReference>
<dbReference type="BioGRID" id="59394">
    <property type="interactions" value="20"/>
</dbReference>
<dbReference type="FunCoup" id="O01939">
    <property type="interactions" value="1178"/>
</dbReference>
<dbReference type="STRING" id="7227.FBpp0312074"/>
<dbReference type="PaxDb" id="7227-FBpp0076907"/>
<dbReference type="EnsemblMetazoa" id="FBtr0077211">
    <property type="protein sequence ID" value="FBpp0076907"/>
    <property type="gene ID" value="FBgn0020272"/>
</dbReference>
<dbReference type="EnsemblMetazoa" id="FBtr0346380">
    <property type="protein sequence ID" value="FBpp0312074"/>
    <property type="gene ID" value="FBgn0020272"/>
</dbReference>
<dbReference type="GeneID" id="33119"/>
<dbReference type="KEGG" id="dme:Dmel_CG1424"/>
<dbReference type="UCSC" id="CG1424-RA">
    <property type="organism name" value="d. melanogaster"/>
</dbReference>
<dbReference type="AGR" id="FB:FBgn0020272"/>
<dbReference type="CTD" id="33119"/>
<dbReference type="FlyBase" id="FBgn0020272">
    <property type="gene designation" value="mst"/>
</dbReference>
<dbReference type="VEuPathDB" id="VectorBase:FBgn0020272"/>
<dbReference type="eggNOG" id="KOG2530">
    <property type="taxonomic scope" value="Eukaryota"/>
</dbReference>
<dbReference type="HOGENOM" id="CLU_022511_1_0_1"/>
<dbReference type="InParanoid" id="O01939"/>
<dbReference type="OMA" id="RMAAYGC"/>
<dbReference type="OrthoDB" id="271881at2759"/>
<dbReference type="PhylomeDB" id="O01939"/>
<dbReference type="BioGRID-ORCS" id="33119">
    <property type="hits" value="1 hit in 1 CRISPR screen"/>
</dbReference>
<dbReference type="GenomeRNAi" id="33119"/>
<dbReference type="PRO" id="PR:O01939"/>
<dbReference type="Proteomes" id="UP000000803">
    <property type="component" value="Chromosome X"/>
</dbReference>
<dbReference type="Bgee" id="FBgn0020272">
    <property type="expression patterns" value="Expressed in secondary oocyte and 35 other cell types or tissues"/>
</dbReference>
<dbReference type="ExpressionAtlas" id="O01939">
    <property type="expression patterns" value="baseline and differential"/>
</dbReference>
<dbReference type="GO" id="GO:0005737">
    <property type="term" value="C:cytoplasm"/>
    <property type="evidence" value="ECO:0000314"/>
    <property type="project" value="FlyBase"/>
</dbReference>
<dbReference type="GO" id="GO:0005829">
    <property type="term" value="C:cytosol"/>
    <property type="evidence" value="ECO:0000250"/>
    <property type="project" value="FlyBase"/>
</dbReference>
<dbReference type="GO" id="GO:0005739">
    <property type="term" value="C:mitochondrion"/>
    <property type="evidence" value="ECO:0000318"/>
    <property type="project" value="GO_Central"/>
</dbReference>
<dbReference type="GO" id="GO:0007005">
    <property type="term" value="P:mitochondrion organization"/>
    <property type="evidence" value="ECO:0000318"/>
    <property type="project" value="GO_Central"/>
</dbReference>
<dbReference type="GO" id="GO:0000070">
    <property type="term" value="P:mitotic sister chromatid segregation"/>
    <property type="evidence" value="ECO:0000315"/>
    <property type="project" value="FlyBase"/>
</dbReference>
<dbReference type="GO" id="GO:0090307">
    <property type="term" value="P:mitotic spindle assembly"/>
    <property type="evidence" value="ECO:0000315"/>
    <property type="project" value="FlyBase"/>
</dbReference>
<dbReference type="GO" id="GO:0010636">
    <property type="term" value="P:positive regulation of mitochondrial fusion"/>
    <property type="evidence" value="ECO:0000250"/>
    <property type="project" value="FlyBase"/>
</dbReference>
<dbReference type="CDD" id="cd06060">
    <property type="entry name" value="misato"/>
    <property type="match status" value="1"/>
</dbReference>
<dbReference type="Gene3D" id="3.40.50.1440">
    <property type="entry name" value="Tubulin/FtsZ, GTPase domain"/>
    <property type="match status" value="1"/>
</dbReference>
<dbReference type="InterPro" id="IPR049942">
    <property type="entry name" value="DML1/Misato"/>
</dbReference>
<dbReference type="InterPro" id="IPR029209">
    <property type="entry name" value="DML1/Misato_tubulin"/>
</dbReference>
<dbReference type="InterPro" id="IPR019605">
    <property type="entry name" value="Misato_II_tubulin-like"/>
</dbReference>
<dbReference type="InterPro" id="IPR036525">
    <property type="entry name" value="Tubulin/FtsZ_GTPase_sf"/>
</dbReference>
<dbReference type="PANTHER" id="PTHR13391">
    <property type="entry name" value="MITOCHONDRIAL DISTRIBUTION REGULATOR MISATO"/>
    <property type="match status" value="1"/>
</dbReference>
<dbReference type="PANTHER" id="PTHR13391:SF0">
    <property type="entry name" value="PROTEIN MISATO HOMOLOG 1"/>
    <property type="match status" value="1"/>
</dbReference>
<dbReference type="Pfam" id="PF10644">
    <property type="entry name" value="Misat_Tub_SegII"/>
    <property type="match status" value="1"/>
</dbReference>
<dbReference type="Pfam" id="PF14881">
    <property type="entry name" value="Tubulin_3"/>
    <property type="match status" value="1"/>
</dbReference>
<dbReference type="SUPFAM" id="SSF52490">
    <property type="entry name" value="Tubulin nucleotide-binding domain-like"/>
    <property type="match status" value="1"/>
</dbReference>
<gene>
    <name type="primary">mst</name>
    <name type="ORF">CG1424</name>
</gene>
<feature type="chain" id="PRO_0000304632" description="Protein misato">
    <location>
        <begin position="1"/>
        <end position="574"/>
    </location>
</feature>
<accession>O01939</accession>
<accession>Q8MSB2</accession>